<gene>
    <name evidence="7 9" type="primary">Atf4</name>
</gene>
<sequence>MTEMSFLNSEVLAGDLMSPFDQSGLGAEESLGLLDDYLEVAKHFKPHGFSSDKAGSSEWLAMDGLVSASDTGKEDAFSGTDWMLEKMDLKEFDFDALFRMDDLETMPDELLATLDDTCDLFAPLVQETNKEPPQTVNPIGHLPESVIKVDQAAPFTFLQPLPCSPGFLSSTPDHSFSLELGSEVDISEGDRKPDSAAYITLTPQCVKEEDTPSDSDSGICMSPESYLGSPQHSPSTSRAPPDSLPSPGVPRGSRPKPYDPPGVSVTAKVKTEKLDKKLKKMEQNKTAATRYRQKKRAEQEALTGECKELEKKNEALKEKADSLAKEIQYLKDLIEEVRKARGKKRVP</sequence>
<comment type="function">
    <text evidence="1 2">Transcription factor that binds the cAMP response element (CRE) (consensus: 5'-GTGACGT[AC][AG]-3') and displays two biological functions, as regulator of metabolic and redox processes under normal cellular conditions, and as master transcription factor during integrated stress response (ISR) (By similarity). Binds to asymmetric CRE's as a heterodimer and to palindromic CRE's as a homodimer (By similarity). Core effector of the ISR, which is required for adaptation to various stress such as endoplasmic reticulum (ER) stress, amino acid starvation, mitochondrial stress or oxidative stress. During ISR, ATF4 translation is induced via an alternative ribosome translation re-initiation mechanism in response to EIF2S1/eIF-2-alpha phosphorylation, and stress-induced ATF4 acts as a master transcription factor of stress-responsive genes in order to promote cell recovery (By similarity). Promotes the transcription of genes linked to amino acid sufficiency and resistance to oxidative stress to protect cells against metabolic consequences of ER oxidation (By similarity). Activates the transcription of NLRP1, possibly in concert with other factors in response to ER stress. Activates the transcription of asparagine synthetase (ASNS) in response to amino acid deprivation or ER stress. However, when associated with DDIT3/CHOP, the transcriptional activation of the ASNS gene is inhibited in response to amino acid deprivation (By similarity). Together with DDIT3/CHOP, mediates programmed cell death by promoting the expression of genes involved in cellular amino acid metabolic processes, mRNA translation and the terminal unfolded protein response (terminal UPR), a cellular response that elicits programmed cell death when ER stress is prolonged and unresolved (By similarity). Activates the expression of COX7A2L/SCAF1 downstream of the EIF2AK3/PERK-mediated unfolded protein response, thereby promoting formation of respiratory chain supercomplexes and increasing mitochondrial oxidative phosphorylation (By similarity). Together with DDIT3/CHOP, activates the transcription of the IRS-regulator TRIB3 and promotes ER stress-induced neuronal cell death by regulating the expression of BBC3/PUMA in response to ER stress. May cooperate with the UPR transcriptional regulator QRICH1 to regulate ER protein homeostasis which is critical for cell viability in response to ER stress (By similarity). In the absence of stress, ATF4 translation is at low levels and it is required for normal metabolic processes such as embryonic lens formation, fetal liver hematopoiesis, bone development and synaptic plasticity (By similarity). Acts as a regulator of osteoblast differentiation in response to phosphorylation by RPS6KA3/RSK2: phosphorylation in osteoblasts enhances transactivation activity and promotes expression of osteoblast-specific genes and post-transcriptionally regulates the synthesis of Type I collagen, the main constituent of the bone matrix (By similarity). Cooperates with FOXO1 in osteoblasts to regulate glucose homeostasis through suppression of beta-cell production and decrease in insulin production. Activates transcription of SIRT4. Regulates the circadian expression of the core clock component PER2 and the serotonin transporter SLC6A4. Binds in a circadian time-dependent manner to the cAMP response elements (CRE) in the SLC6A4 and PER2 promoters and periodically activates the transcription of these genes. Mainly acts as a transcriptional activator in cellular stress adaptation, but it can also act as a transcriptional repressor: acts as a regulator of synaptic plasticity by repressing transcription, thereby inhibiting induction and maintenance of long-term memory (By similarity). Regulates synaptic functions via interaction with DISC1 in neurons, which inhibits ATF4 transcription factor activity by disrupting ATF4 dimerization and DNA-binding (By similarity).</text>
</comment>
<comment type="subunit">
    <text evidence="1 2 5">Binds DNA as a homodimer and as a heterodimer. Heterodimer; heterodimerizes with CEBPB. Heterodimer; heterodimerizes with DDIT3/CHOP. Interacts with CEP290 (via an N-terminal region). Interacts with NEK6, DAPK2 (isoform 2) and ZIPK/DAPK3 (By similarity). Interacts (via its leucine zipper domain) with GABBR1 and GABBR2 (via their C-termini) (PubMed:10924501). Forms a heterodimer with TXLNG in osteoblasts (By similarity). Interacts (via its DNA binding domain) with FOXO1 (C-terminal half); the interaction occurs in osteoblasts and regulates glucose homeostasis through suppression of beta-cell proliferation and a decrease in insulin production. Interacts with SATB2; the interaction results in enhanced DNA binding and transactivation by these transcription factors (By similarity). Interacts with ABRAXAS2 (By similarity). Interacts with TRIB3, inhibiting the transactivation activity of ATF4. Interacts with DISC1; which inhibits ATF4 transcription factor activity by disrupting ATF4 dimerization and DNA-binding (By similarity). Interacts with EP300/p300; EP300/p300 stabilizes ATF4 and increases its transcriptional activity independently of its catalytic activity by preventing its ubiquitination (By similarity).</text>
</comment>
<comment type="subcellular location">
    <subcellularLocation>
        <location evidence="5">Nucleus</location>
    </subcellularLocation>
    <subcellularLocation>
        <location evidence="1">Nucleus speckle</location>
    </subcellularLocation>
    <subcellularLocation>
        <location evidence="5">Cytoplasm</location>
    </subcellularLocation>
    <subcellularLocation>
        <location evidence="5">Cell membrane</location>
    </subcellularLocation>
    <subcellularLocation>
        <location evidence="1">Cytoplasm</location>
        <location evidence="1">Cytoskeleton</location>
        <location evidence="1">Microtubule organizing center</location>
        <location evidence="1">Centrosome</location>
    </subcellularLocation>
    <text evidence="1 5">Colocalizes with GABBR1 in hippocampal neuron dendritic membranes (PubMed:10924501). Colocalizes with NEK6 at the centrosome. Recruited to nuclear speckles following interaction with EP300/p300 (By similarity).</text>
</comment>
<comment type="tissue specificity">
    <text evidence="6">Expressed in brain, heart, liver, spleen, lung and muscle, but not testis.</text>
</comment>
<comment type="domain">
    <text evidence="1">The BetaTrCP degron motif promotes binding to BTRC when phosphorylated.</text>
</comment>
<comment type="PTM">
    <text evidence="1">Ubiquitinated by SCF(BTRC) in response to mTORC1 signal, followed by proteasomal degradation and leading to down-regulate expression of SIRT4. Interaction with EP300/p300 inhibits ubiquitination by SCF(BTRC).</text>
</comment>
<comment type="PTM">
    <text evidence="1 2">Phosphorylation at Ser-243 by RPS6KA3/RSK2 in osteoblasts enhances transactivation activity and promotes osteoblast differentiation (By similarity). Phosphorylated on the betaTrCP degron motif at Ser-217, followed by phosphorylation at Thr-211, Ser-222, Ser-229, Ser-233 and Ser-246, promoting interaction with BTRC and ubiquitination. Phosphorylation is promoted by mTORC1 (By similarity). Phosphorylation at Ser-213 by CK2 decreases its stability. Phosphorylated by NEK6 (By similarity).</text>
</comment>
<comment type="PTM">
    <text evidence="1">Hydroxylated by PHD3, leading to decreased protein stability.</text>
</comment>
<comment type="similarity">
    <text evidence="8">Belongs to the bZIP family.</text>
</comment>
<accession>Q9ES19</accession>
<evidence type="ECO:0000250" key="1">
    <source>
        <dbReference type="UniProtKB" id="P18848"/>
    </source>
</evidence>
<evidence type="ECO:0000250" key="2">
    <source>
        <dbReference type="UniProtKB" id="Q06507"/>
    </source>
</evidence>
<evidence type="ECO:0000255" key="3">
    <source>
        <dbReference type="PROSITE-ProRule" id="PRU00978"/>
    </source>
</evidence>
<evidence type="ECO:0000256" key="4">
    <source>
        <dbReference type="SAM" id="MobiDB-lite"/>
    </source>
</evidence>
<evidence type="ECO:0000269" key="5">
    <source>
    </source>
</evidence>
<evidence type="ECO:0000269" key="6">
    <source>
    </source>
</evidence>
<evidence type="ECO:0000303" key="7">
    <source>
    </source>
</evidence>
<evidence type="ECO:0000305" key="8"/>
<evidence type="ECO:0000312" key="9">
    <source>
        <dbReference type="RGD" id="621863"/>
    </source>
</evidence>
<proteinExistence type="evidence at protein level"/>
<protein>
    <recommendedName>
        <fullName>Cyclic AMP-dependent transcription factor ATF-4</fullName>
        <shortName>cAMP-dependent transcription factor ATF-4</shortName>
    </recommendedName>
    <alternativeName>
        <fullName evidence="7">Activating transcription factor 4</fullName>
        <shortName evidence="7">rATF-4</shortName>
    </alternativeName>
</protein>
<reference key="1">
    <citation type="journal article" date="2000" name="J. Biol. Chem.">
        <title>The metabotropic GABAB receptor directly interacts with the activating transcription factor 4.</title>
        <authorList>
            <person name="Nehring R.B."/>
            <person name="Horikawa H.P.M."/>
            <person name="El Far O."/>
            <person name="Kneussel M."/>
            <person name="Brandstatter J.H."/>
            <person name="Stamm S."/>
            <person name="Wischmeyer E."/>
            <person name="Betz H."/>
            <person name="Karschin A."/>
        </authorList>
    </citation>
    <scope>NUCLEOTIDE SEQUENCE [MRNA]</scope>
    <scope>INTERACTION WITH GABBR1 AND GABBR2</scope>
    <scope>SUBCELLULAR LOCATION</scope>
    <source>
        <tissue>Brain</tissue>
    </source>
</reference>
<reference key="2">
    <citation type="journal article" date="1993" name="Proc. Natl. Acad. Sci. U.S.A.">
        <title>C/ATF, a member of the activating transcription factor family of DNA-binding proteins, dimerizes with CAAT/enhancer-binding proteins and directs their binding to cAMP response elements.</title>
        <authorList>
            <person name="Vallejo M."/>
            <person name="Ron D."/>
            <person name="Miller C.P."/>
            <person name="Habener J.F."/>
        </authorList>
    </citation>
    <scope>TISSUE SPECIFICITY</scope>
</reference>
<name>ATF4_RAT</name>
<keyword id="KW-0007">Acetylation</keyword>
<keyword id="KW-0010">Activator</keyword>
<keyword id="KW-0090">Biological rhythms</keyword>
<keyword id="KW-1003">Cell membrane</keyword>
<keyword id="KW-0963">Cytoplasm</keyword>
<keyword id="KW-0206">Cytoskeleton</keyword>
<keyword id="KW-0238">DNA-binding</keyword>
<keyword id="KW-0379">Hydroxylation</keyword>
<keyword id="KW-1017">Isopeptide bond</keyword>
<keyword id="KW-0472">Membrane</keyword>
<keyword id="KW-0539">Nucleus</keyword>
<keyword id="KW-0597">Phosphoprotein</keyword>
<keyword id="KW-1185">Reference proteome</keyword>
<keyword id="KW-0678">Repressor</keyword>
<keyword id="KW-0804">Transcription</keyword>
<keyword id="KW-0805">Transcription regulation</keyword>
<keyword id="KW-0832">Ubl conjugation</keyword>
<organism>
    <name type="scientific">Rattus norvegicus</name>
    <name type="common">Rat</name>
    <dbReference type="NCBI Taxonomy" id="10116"/>
    <lineage>
        <taxon>Eukaryota</taxon>
        <taxon>Metazoa</taxon>
        <taxon>Chordata</taxon>
        <taxon>Craniata</taxon>
        <taxon>Vertebrata</taxon>
        <taxon>Euteleostomi</taxon>
        <taxon>Mammalia</taxon>
        <taxon>Eutheria</taxon>
        <taxon>Euarchontoglires</taxon>
        <taxon>Glires</taxon>
        <taxon>Rodentia</taxon>
        <taxon>Myomorpha</taxon>
        <taxon>Muroidea</taxon>
        <taxon>Muridae</taxon>
        <taxon>Murinae</taxon>
        <taxon>Rattus</taxon>
    </lineage>
</organism>
<dbReference type="EMBL" id="AF252627">
    <property type="protein sequence ID" value="AAG31732.1"/>
    <property type="molecule type" value="mRNA"/>
</dbReference>
<dbReference type="RefSeq" id="NP_077379.1">
    <property type="nucleotide sequence ID" value="NM_024403.2"/>
</dbReference>
<dbReference type="SMR" id="Q9ES19"/>
<dbReference type="BioGRID" id="249453">
    <property type="interactions" value="2"/>
</dbReference>
<dbReference type="FunCoup" id="Q9ES19">
    <property type="interactions" value="1165"/>
</dbReference>
<dbReference type="IntAct" id="Q9ES19">
    <property type="interactions" value="1"/>
</dbReference>
<dbReference type="STRING" id="10116.ENSRNOP00000060302"/>
<dbReference type="PhosphoSitePlus" id="Q9ES19"/>
<dbReference type="PaxDb" id="10116-ENSRNOP00000060302"/>
<dbReference type="ABCD" id="Q9ES19">
    <property type="antibodies" value="1 sequenced antibody"/>
</dbReference>
<dbReference type="DNASU" id="79255"/>
<dbReference type="Ensembl" id="ENSRNOT00000065304.5">
    <property type="protein sequence ID" value="ENSRNOP00000060302.1"/>
    <property type="gene ID" value="ENSRNOG00000017801.8"/>
</dbReference>
<dbReference type="GeneID" id="79255"/>
<dbReference type="KEGG" id="rno:79255"/>
<dbReference type="UCSC" id="RGD:621863">
    <property type="organism name" value="rat"/>
</dbReference>
<dbReference type="AGR" id="RGD:621863"/>
<dbReference type="CTD" id="468"/>
<dbReference type="RGD" id="621863">
    <property type="gene designation" value="Atf4"/>
</dbReference>
<dbReference type="eggNOG" id="KOG4571">
    <property type="taxonomic scope" value="Eukaryota"/>
</dbReference>
<dbReference type="GeneTree" id="ENSGT00530000063801"/>
<dbReference type="HOGENOM" id="CLU_055748_1_0_1"/>
<dbReference type="InParanoid" id="Q9ES19"/>
<dbReference type="OMA" id="ATIQEFH"/>
<dbReference type="OrthoDB" id="71635at9989"/>
<dbReference type="PhylomeDB" id="Q9ES19"/>
<dbReference type="PRO" id="PR:Q9ES19"/>
<dbReference type="Proteomes" id="UP000002494">
    <property type="component" value="Chromosome 7"/>
</dbReference>
<dbReference type="Bgee" id="ENSRNOG00000017801">
    <property type="expression patterns" value="Expressed in pancreas and 20 other cell types or tissues"/>
</dbReference>
<dbReference type="ExpressionAtlas" id="Q9ES19">
    <property type="expression patterns" value="baseline and differential"/>
</dbReference>
<dbReference type="GO" id="GO:1990590">
    <property type="term" value="C:ATF1-ATF4 transcription factor complex"/>
    <property type="evidence" value="ECO:0000266"/>
    <property type="project" value="RGD"/>
</dbReference>
<dbReference type="GO" id="GO:1990589">
    <property type="term" value="C:ATF4-CREB1 transcription factor complex"/>
    <property type="evidence" value="ECO:0000266"/>
    <property type="project" value="RGD"/>
</dbReference>
<dbReference type="GO" id="GO:0005813">
    <property type="term" value="C:centrosome"/>
    <property type="evidence" value="ECO:0000266"/>
    <property type="project" value="RGD"/>
</dbReference>
<dbReference type="GO" id="GO:1990617">
    <property type="term" value="C:CHOP-ATF4 complex"/>
    <property type="evidence" value="ECO:0000266"/>
    <property type="project" value="RGD"/>
</dbReference>
<dbReference type="GO" id="GO:0005737">
    <property type="term" value="C:cytoplasm"/>
    <property type="evidence" value="ECO:0000266"/>
    <property type="project" value="RGD"/>
</dbReference>
<dbReference type="GO" id="GO:0032590">
    <property type="term" value="C:dendrite membrane"/>
    <property type="evidence" value="ECO:0000314"/>
    <property type="project" value="RGD"/>
</dbReference>
<dbReference type="GO" id="GO:1990037">
    <property type="term" value="C:Lewy body core"/>
    <property type="evidence" value="ECO:0000266"/>
    <property type="project" value="RGD"/>
</dbReference>
<dbReference type="GO" id="GO:0043005">
    <property type="term" value="C:neuron projection"/>
    <property type="evidence" value="ECO:0000266"/>
    <property type="project" value="RGD"/>
</dbReference>
<dbReference type="GO" id="GO:0034399">
    <property type="term" value="C:nuclear periphery"/>
    <property type="evidence" value="ECO:0000266"/>
    <property type="project" value="RGD"/>
</dbReference>
<dbReference type="GO" id="GO:0016607">
    <property type="term" value="C:nuclear speck"/>
    <property type="evidence" value="ECO:0007669"/>
    <property type="project" value="UniProtKB-SubCell"/>
</dbReference>
<dbReference type="GO" id="GO:0005654">
    <property type="term" value="C:nucleoplasm"/>
    <property type="evidence" value="ECO:0000304"/>
    <property type="project" value="Reactome"/>
</dbReference>
<dbReference type="GO" id="GO:0005634">
    <property type="term" value="C:nucleus"/>
    <property type="evidence" value="ECO:0000266"/>
    <property type="project" value="RGD"/>
</dbReference>
<dbReference type="GO" id="GO:0032991">
    <property type="term" value="C:protein-containing complex"/>
    <property type="evidence" value="ECO:0000266"/>
    <property type="project" value="RGD"/>
</dbReference>
<dbReference type="GO" id="GO:0090575">
    <property type="term" value="C:RNA polymerase II transcription regulator complex"/>
    <property type="evidence" value="ECO:0000266"/>
    <property type="project" value="RGD"/>
</dbReference>
<dbReference type="GO" id="GO:0005667">
    <property type="term" value="C:transcription regulator complex"/>
    <property type="evidence" value="ECO:0000266"/>
    <property type="project" value="RGD"/>
</dbReference>
<dbReference type="GO" id="GO:0008140">
    <property type="term" value="F:cAMP response element binding protein binding"/>
    <property type="evidence" value="ECO:0000250"/>
    <property type="project" value="UniProtKB"/>
</dbReference>
<dbReference type="GO" id="GO:0003677">
    <property type="term" value="F:DNA binding"/>
    <property type="evidence" value="ECO:0000250"/>
    <property type="project" value="UniProtKB"/>
</dbReference>
<dbReference type="GO" id="GO:0001228">
    <property type="term" value="F:DNA-binding transcription activator activity, RNA polymerase II-specific"/>
    <property type="evidence" value="ECO:0000266"/>
    <property type="project" value="RGD"/>
</dbReference>
<dbReference type="GO" id="GO:0003700">
    <property type="term" value="F:DNA-binding transcription factor activity"/>
    <property type="evidence" value="ECO:0000250"/>
    <property type="project" value="UniProtKB"/>
</dbReference>
<dbReference type="GO" id="GO:0000981">
    <property type="term" value="F:DNA-binding transcription factor activity, RNA polymerase II-specific"/>
    <property type="evidence" value="ECO:0000266"/>
    <property type="project" value="RGD"/>
</dbReference>
<dbReference type="GO" id="GO:0140297">
    <property type="term" value="F:DNA-binding transcription factor binding"/>
    <property type="evidence" value="ECO:0000353"/>
    <property type="project" value="RGD"/>
</dbReference>
<dbReference type="GO" id="GO:0140296">
    <property type="term" value="F:general transcription initiation factor binding"/>
    <property type="evidence" value="ECO:0000353"/>
    <property type="project" value="RGD"/>
</dbReference>
<dbReference type="GO" id="GO:0042802">
    <property type="term" value="F:identical protein binding"/>
    <property type="evidence" value="ECO:0000266"/>
    <property type="project" value="RGD"/>
</dbReference>
<dbReference type="GO" id="GO:0043522">
    <property type="term" value="F:leucine zipper domain binding"/>
    <property type="evidence" value="ECO:0000266"/>
    <property type="project" value="RGD"/>
</dbReference>
<dbReference type="GO" id="GO:1990841">
    <property type="term" value="F:promoter-specific chromatin binding"/>
    <property type="evidence" value="ECO:0000266"/>
    <property type="project" value="RGD"/>
</dbReference>
<dbReference type="GO" id="GO:0046982">
    <property type="term" value="F:protein heterodimerization activity"/>
    <property type="evidence" value="ECO:0000250"/>
    <property type="project" value="UniProtKB"/>
</dbReference>
<dbReference type="GO" id="GO:0019901">
    <property type="term" value="F:protein kinase binding"/>
    <property type="evidence" value="ECO:0000266"/>
    <property type="project" value="RGD"/>
</dbReference>
<dbReference type="GO" id="GO:0000978">
    <property type="term" value="F:RNA polymerase II cis-regulatory region sequence-specific DNA binding"/>
    <property type="evidence" value="ECO:0000250"/>
    <property type="project" value="UniProtKB"/>
</dbReference>
<dbReference type="GO" id="GO:0000977">
    <property type="term" value="F:RNA polymerase II transcription regulatory region sequence-specific DNA binding"/>
    <property type="evidence" value="ECO:0000318"/>
    <property type="project" value="GO_Central"/>
</dbReference>
<dbReference type="GO" id="GO:0061629">
    <property type="term" value="F:RNA polymerase II-specific DNA-binding transcription factor binding"/>
    <property type="evidence" value="ECO:0000266"/>
    <property type="project" value="RGD"/>
</dbReference>
<dbReference type="GO" id="GO:0043565">
    <property type="term" value="F:sequence-specific DNA binding"/>
    <property type="evidence" value="ECO:0000266"/>
    <property type="project" value="RGD"/>
</dbReference>
<dbReference type="GO" id="GO:1990837">
    <property type="term" value="F:sequence-specific double-stranded DNA binding"/>
    <property type="evidence" value="ECO:0000266"/>
    <property type="project" value="RGD"/>
</dbReference>
<dbReference type="GO" id="GO:0000976">
    <property type="term" value="F:transcription cis-regulatory region binding"/>
    <property type="evidence" value="ECO:0000266"/>
    <property type="project" value="RGD"/>
</dbReference>
<dbReference type="GO" id="GO:0030282">
    <property type="term" value="P:bone mineralization"/>
    <property type="evidence" value="ECO:0000250"/>
    <property type="project" value="UniProtKB"/>
</dbReference>
<dbReference type="GO" id="GO:0034198">
    <property type="term" value="P:cellular response to amino acid starvation"/>
    <property type="evidence" value="ECO:0000250"/>
    <property type="project" value="UniProtKB"/>
</dbReference>
<dbReference type="GO" id="GO:0042149">
    <property type="term" value="P:cellular response to glucose starvation"/>
    <property type="evidence" value="ECO:0000266"/>
    <property type="project" value="RGD"/>
</dbReference>
<dbReference type="GO" id="GO:0071456">
    <property type="term" value="P:cellular response to hypoxia"/>
    <property type="evidence" value="ECO:0000270"/>
    <property type="project" value="RGD"/>
</dbReference>
<dbReference type="GO" id="GO:1990253">
    <property type="term" value="P:cellular response to leucine starvation"/>
    <property type="evidence" value="ECO:0000266"/>
    <property type="project" value="RGD"/>
</dbReference>
<dbReference type="GO" id="GO:0034599">
    <property type="term" value="P:cellular response to oxidative stress"/>
    <property type="evidence" value="ECO:0000315"/>
    <property type="project" value="ParkinsonsUK-UCL"/>
</dbReference>
<dbReference type="GO" id="GO:0034644">
    <property type="term" value="P:cellular response to UV"/>
    <property type="evidence" value="ECO:0000250"/>
    <property type="project" value="UniProtKB"/>
</dbReference>
<dbReference type="GO" id="GO:0032922">
    <property type="term" value="P:circadian regulation of gene expression"/>
    <property type="evidence" value="ECO:0000250"/>
    <property type="project" value="UniProtKB"/>
</dbReference>
<dbReference type="GO" id="GO:0007623">
    <property type="term" value="P:circadian rhythm"/>
    <property type="evidence" value="ECO:0000266"/>
    <property type="project" value="RGD"/>
</dbReference>
<dbReference type="GO" id="GO:0035162">
    <property type="term" value="P:embryonic hemopoiesis"/>
    <property type="evidence" value="ECO:0000250"/>
    <property type="project" value="UniProtKB"/>
</dbReference>
<dbReference type="GO" id="GO:0030968">
    <property type="term" value="P:endoplasmic reticulum unfolded protein response"/>
    <property type="evidence" value="ECO:0000250"/>
    <property type="project" value="UniProtKB"/>
</dbReference>
<dbReference type="GO" id="GO:0007214">
    <property type="term" value="P:gamma-aminobutyric acid signaling pathway"/>
    <property type="evidence" value="ECO:0000314"/>
    <property type="project" value="RGD"/>
</dbReference>
<dbReference type="GO" id="GO:0006094">
    <property type="term" value="P:gluconeogenesis"/>
    <property type="evidence" value="ECO:0000266"/>
    <property type="project" value="RGD"/>
</dbReference>
<dbReference type="GO" id="GO:0140468">
    <property type="term" value="P:HRI-mediated signaling"/>
    <property type="evidence" value="ECO:0000250"/>
    <property type="project" value="UniProtKB"/>
</dbReference>
<dbReference type="GO" id="GO:0140467">
    <property type="term" value="P:integrated stress response signaling"/>
    <property type="evidence" value="ECO:0000250"/>
    <property type="project" value="UniProtKB"/>
</dbReference>
<dbReference type="GO" id="GO:0006874">
    <property type="term" value="P:intracellular calcium ion homeostasis"/>
    <property type="evidence" value="ECO:0000266"/>
    <property type="project" value="RGD"/>
</dbReference>
<dbReference type="GO" id="GO:0070059">
    <property type="term" value="P:intrinsic apoptotic signaling pathway in response to endoplasmic reticulum stress"/>
    <property type="evidence" value="ECO:0000250"/>
    <property type="project" value="UniProtKB"/>
</dbReference>
<dbReference type="GO" id="GO:0070982">
    <property type="term" value="P:L-asparagine metabolic process"/>
    <property type="evidence" value="ECO:0000266"/>
    <property type="project" value="RGD"/>
</dbReference>
<dbReference type="GO" id="GO:0070309">
    <property type="term" value="P:lens fiber cell morphogenesis"/>
    <property type="evidence" value="ECO:0000250"/>
    <property type="project" value="UniProtKB"/>
</dbReference>
<dbReference type="GO" id="GO:0042789">
    <property type="term" value="P:mRNA transcription by RNA polymerase II"/>
    <property type="evidence" value="ECO:0000250"/>
    <property type="project" value="UniProtKB"/>
</dbReference>
<dbReference type="GO" id="GO:0120163">
    <property type="term" value="P:negative regulation of cold-induced thermogenesis"/>
    <property type="evidence" value="ECO:0000250"/>
    <property type="project" value="YuBioLab"/>
</dbReference>
<dbReference type="GO" id="GO:1903377">
    <property type="term" value="P:negative regulation of oxidative stress-induced neuron intrinsic apoptotic signaling pathway"/>
    <property type="evidence" value="ECO:0000315"/>
    <property type="project" value="ParkinsonsUK-UCL"/>
</dbReference>
<dbReference type="GO" id="GO:0043267">
    <property type="term" value="P:negative regulation of potassium ion transport"/>
    <property type="evidence" value="ECO:0000315"/>
    <property type="project" value="RGD"/>
</dbReference>
<dbReference type="GO" id="GO:0000122">
    <property type="term" value="P:negative regulation of transcription by RNA polymerase II"/>
    <property type="evidence" value="ECO:0000250"/>
    <property type="project" value="UniProtKB"/>
</dbReference>
<dbReference type="GO" id="GO:0032057">
    <property type="term" value="P:negative regulation of translational initiation in response to stress"/>
    <property type="evidence" value="ECO:0000250"/>
    <property type="project" value="UniProtKB"/>
</dbReference>
<dbReference type="GO" id="GO:0030182">
    <property type="term" value="P:neuron differentiation"/>
    <property type="evidence" value="ECO:0000270"/>
    <property type="project" value="RGD"/>
</dbReference>
<dbReference type="GO" id="GO:0036499">
    <property type="term" value="P:PERK-mediated unfolded protein response"/>
    <property type="evidence" value="ECO:0000250"/>
    <property type="project" value="UniProtKB"/>
</dbReference>
<dbReference type="GO" id="GO:0070169">
    <property type="term" value="P:positive regulation of biomineral tissue development"/>
    <property type="evidence" value="ECO:0000266"/>
    <property type="project" value="RGD"/>
</dbReference>
<dbReference type="GO" id="GO:0045893">
    <property type="term" value="P:positive regulation of DNA-templated transcription"/>
    <property type="evidence" value="ECO:0000250"/>
    <property type="project" value="UniProtKB"/>
</dbReference>
<dbReference type="GO" id="GO:0010628">
    <property type="term" value="P:positive regulation of gene expression"/>
    <property type="evidence" value="ECO:0000266"/>
    <property type="project" value="RGD"/>
</dbReference>
<dbReference type="GO" id="GO:0043525">
    <property type="term" value="P:positive regulation of neuron apoptotic process"/>
    <property type="evidence" value="ECO:0000250"/>
    <property type="project" value="UniProtKB"/>
</dbReference>
<dbReference type="GO" id="GO:2000120">
    <property type="term" value="P:positive regulation of sodium-dependent phosphate transport"/>
    <property type="evidence" value="ECO:0000266"/>
    <property type="project" value="RGD"/>
</dbReference>
<dbReference type="GO" id="GO:0045943">
    <property type="term" value="P:positive regulation of transcription by RNA polymerase I"/>
    <property type="evidence" value="ECO:0000266"/>
    <property type="project" value="RGD"/>
</dbReference>
<dbReference type="GO" id="GO:0045944">
    <property type="term" value="P:positive regulation of transcription by RNA polymerase II"/>
    <property type="evidence" value="ECO:0000315"/>
    <property type="project" value="ParkinsonsUK-UCL"/>
</dbReference>
<dbReference type="GO" id="GO:1905461">
    <property type="term" value="P:positive regulation of vascular associated smooth muscle cell apoptotic process"/>
    <property type="evidence" value="ECO:0000266"/>
    <property type="project" value="RGD"/>
</dbReference>
<dbReference type="GO" id="GO:0010575">
    <property type="term" value="P:positive regulation of vascular endothelial growth factor production"/>
    <property type="evidence" value="ECO:0000266"/>
    <property type="project" value="RGD"/>
</dbReference>
<dbReference type="GO" id="GO:0006355">
    <property type="term" value="P:regulation of DNA-templated transcription"/>
    <property type="evidence" value="ECO:0000250"/>
    <property type="project" value="UniProtKB"/>
</dbReference>
<dbReference type="GO" id="GO:0045667">
    <property type="term" value="P:regulation of osteoblast differentiation"/>
    <property type="evidence" value="ECO:0000250"/>
    <property type="project" value="UniProtKB"/>
</dbReference>
<dbReference type="GO" id="GO:0048167">
    <property type="term" value="P:regulation of synaptic plasticity"/>
    <property type="evidence" value="ECO:0000250"/>
    <property type="project" value="UniProtKB"/>
</dbReference>
<dbReference type="GO" id="GO:0006357">
    <property type="term" value="P:regulation of transcription by RNA polymerase II"/>
    <property type="evidence" value="ECO:0000266"/>
    <property type="project" value="RGD"/>
</dbReference>
<dbReference type="GO" id="GO:0034976">
    <property type="term" value="P:response to endoplasmic reticulum stress"/>
    <property type="evidence" value="ECO:0000250"/>
    <property type="project" value="UniProtKB"/>
</dbReference>
<dbReference type="GO" id="GO:1990737">
    <property type="term" value="P:response to manganese-induced endoplasmic reticulum stress"/>
    <property type="evidence" value="ECO:0000270"/>
    <property type="project" value="ParkinsonsUK-UCL"/>
</dbReference>
<dbReference type="GO" id="GO:0031667">
    <property type="term" value="P:response to nutrient levels"/>
    <property type="evidence" value="ECO:0000266"/>
    <property type="project" value="RGD"/>
</dbReference>
<dbReference type="GO" id="GO:0009636">
    <property type="term" value="P:response to toxic substance"/>
    <property type="evidence" value="ECO:0000270"/>
    <property type="project" value="RGD"/>
</dbReference>
<dbReference type="GO" id="GO:0006366">
    <property type="term" value="P:transcription by RNA polymerase II"/>
    <property type="evidence" value="ECO:0000266"/>
    <property type="project" value="RGD"/>
</dbReference>
<dbReference type="CDD" id="cd14692">
    <property type="entry name" value="bZIP_ATF4"/>
    <property type="match status" value="1"/>
</dbReference>
<dbReference type="FunFam" id="1.20.5.170:FF:000021">
    <property type="entry name" value="Cyclic AMP-dependent transcription factor ATF-4"/>
    <property type="match status" value="1"/>
</dbReference>
<dbReference type="Gene3D" id="1.20.5.170">
    <property type="match status" value="1"/>
</dbReference>
<dbReference type="InterPro" id="IPR004827">
    <property type="entry name" value="bZIP"/>
</dbReference>
<dbReference type="InterPro" id="IPR046347">
    <property type="entry name" value="bZIP_sf"/>
</dbReference>
<dbReference type="PANTHER" id="PTHR13044">
    <property type="entry name" value="ACTIVATING TRANSCRIPTION FACTOR ATF 4/5"/>
    <property type="match status" value="1"/>
</dbReference>
<dbReference type="PANTHER" id="PTHR13044:SF2">
    <property type="entry name" value="CYCLIC AMP-DEPENDENT TRANSCRIPTION FACTOR ATF-4"/>
    <property type="match status" value="1"/>
</dbReference>
<dbReference type="Pfam" id="PF00170">
    <property type="entry name" value="bZIP_1"/>
    <property type="match status" value="1"/>
</dbReference>
<dbReference type="SMART" id="SM00338">
    <property type="entry name" value="BRLZ"/>
    <property type="match status" value="1"/>
</dbReference>
<dbReference type="SUPFAM" id="SSF57959">
    <property type="entry name" value="Leucine zipper domain"/>
    <property type="match status" value="1"/>
</dbReference>
<dbReference type="PROSITE" id="PS50217">
    <property type="entry name" value="BZIP"/>
    <property type="match status" value="1"/>
</dbReference>
<dbReference type="PROSITE" id="PS00036">
    <property type="entry name" value="BZIP_BASIC"/>
    <property type="match status" value="1"/>
</dbReference>
<feature type="chain" id="PRO_0000258022" description="Cyclic AMP-dependent transcription factor ATF-4">
    <location>
        <begin position="1"/>
        <end position="347"/>
    </location>
</feature>
<feature type="domain" description="bZIP" evidence="3">
    <location>
        <begin position="274"/>
        <end position="337"/>
    </location>
</feature>
<feature type="region of interest" description="Disordered" evidence="4">
    <location>
        <begin position="202"/>
        <end position="296"/>
    </location>
</feature>
<feature type="region of interest" description="Basic motif" evidence="3">
    <location>
        <begin position="276"/>
        <end position="296"/>
    </location>
</feature>
<feature type="region of interest" description="Interaction with GABBR1" evidence="5">
    <location>
        <begin position="301"/>
        <end position="337"/>
    </location>
</feature>
<feature type="region of interest" description="Leucine-zipper" evidence="3">
    <location>
        <begin position="302"/>
        <end position="330"/>
    </location>
</feature>
<feature type="short sequence motif" description="BetaTrCP degron motif" evidence="1">
    <location>
        <begin position="213"/>
        <end position="222"/>
    </location>
</feature>
<feature type="compositionally biased region" description="Polar residues" evidence="4">
    <location>
        <begin position="228"/>
        <end position="238"/>
    </location>
</feature>
<feature type="compositionally biased region" description="Basic and acidic residues" evidence="4">
    <location>
        <begin position="269"/>
        <end position="283"/>
    </location>
</feature>
<feature type="modified residue" description="Phosphothreonine" evidence="2">
    <location>
        <position position="211"/>
    </location>
</feature>
<feature type="modified residue" description="Phosphoserine" evidence="1">
    <location>
        <position position="213"/>
    </location>
</feature>
<feature type="modified residue" description="Phosphoserine" evidence="2">
    <location>
        <position position="217"/>
    </location>
</feature>
<feature type="modified residue" description="Phosphoserine" evidence="2">
    <location>
        <position position="222"/>
    </location>
</feature>
<feature type="modified residue" description="Phosphoserine" evidence="2">
    <location>
        <position position="229"/>
    </location>
</feature>
<feature type="modified residue" description="Phosphoserine" evidence="2">
    <location>
        <position position="233"/>
    </location>
</feature>
<feature type="modified residue" description="4-hydroxyproline" evidence="2">
    <location>
        <position position="234"/>
    </location>
</feature>
<feature type="modified residue" description="Phosphoserine" evidence="2">
    <location>
        <position position="243"/>
    </location>
</feature>
<feature type="modified residue" description="Phosphoserine" evidence="2">
    <location>
        <position position="246"/>
    </location>
</feature>
<feature type="modified residue" description="N6-acetyllysine" evidence="1">
    <location>
        <position position="307"/>
    </location>
</feature>
<feature type="cross-link" description="Glycyl lysine isopeptide (Lys-Gly) (interchain with G-Cter in SUMO2)" evidence="1">
    <location>
        <position position="256"/>
    </location>
</feature>
<feature type="cross-link" description="Glycyl lysine isopeptide (Lys-Gly) (interchain with G-Cter in SUMO2)" evidence="1">
    <location>
        <position position="268"/>
    </location>
</feature>